<protein>
    <recommendedName>
        <fullName>Photosystem I reaction center subunit VI, chloroplastic</fullName>
        <shortName>PSI-H</shortName>
    </recommendedName>
    <alternativeName>
        <fullName>PS I subunit 9B</fullName>
    </alternativeName>
    <alternativeName>
        <fullName>Photosystem I 7.6 kDa protein</fullName>
    </alternativeName>
</protein>
<reference key="1">
    <citation type="journal article" date="1991" name="Biochim. Biophys. Acta">
        <title>Characterization of genes that encode subunits of cucumber PS I complex by N-terminal sequencing.</title>
        <authorList>
            <person name="Iwasaki Y."/>
            <person name="Ishikawa H."/>
            <person name="Hibino T."/>
            <person name="Takabe T."/>
        </authorList>
    </citation>
    <scope>PROTEIN SEQUENCE</scope>
    <source>
        <tissue>Cotyledon</tissue>
    </source>
</reference>
<proteinExistence type="evidence at protein level"/>
<evidence type="ECO:0000305" key="1"/>
<sequence>XYXDKSVYFDLEDKGNTXGQXXXY</sequence>
<comment type="function">
    <text>Possible role could be the docking of the LHC I antenna complex to the core complex.</text>
</comment>
<comment type="subcellular location">
    <subcellularLocation>
        <location>Plastid</location>
        <location>Chloroplast thylakoid membrane</location>
        <topology>Single-pass membrane protein</topology>
    </subcellularLocation>
</comment>
<comment type="similarity">
    <text evidence="1">Belongs to the psaH family.</text>
</comment>
<name>PSAH_CUCSA</name>
<dbReference type="PIR" id="C56819">
    <property type="entry name" value="C56819"/>
</dbReference>
<dbReference type="GO" id="GO:0009535">
    <property type="term" value="C:chloroplast thylakoid membrane"/>
    <property type="evidence" value="ECO:0007669"/>
    <property type="project" value="UniProtKB-SubCell"/>
</dbReference>
<dbReference type="GO" id="GO:0009538">
    <property type="term" value="C:photosystem I reaction center"/>
    <property type="evidence" value="ECO:0007669"/>
    <property type="project" value="InterPro"/>
</dbReference>
<dbReference type="GO" id="GO:0015979">
    <property type="term" value="P:photosynthesis"/>
    <property type="evidence" value="ECO:0007669"/>
    <property type="project" value="UniProtKB-KW"/>
</dbReference>
<dbReference type="InterPro" id="IPR004928">
    <property type="entry name" value="PSI_PsaH"/>
</dbReference>
<dbReference type="Pfam" id="PF03244">
    <property type="entry name" value="PSI_PsaH"/>
    <property type="match status" value="1"/>
</dbReference>
<gene>
    <name type="primary">PSAH</name>
</gene>
<organism>
    <name type="scientific">Cucumis sativus</name>
    <name type="common">Cucumber</name>
    <dbReference type="NCBI Taxonomy" id="3659"/>
    <lineage>
        <taxon>Eukaryota</taxon>
        <taxon>Viridiplantae</taxon>
        <taxon>Streptophyta</taxon>
        <taxon>Embryophyta</taxon>
        <taxon>Tracheophyta</taxon>
        <taxon>Spermatophyta</taxon>
        <taxon>Magnoliopsida</taxon>
        <taxon>eudicotyledons</taxon>
        <taxon>Gunneridae</taxon>
        <taxon>Pentapetalae</taxon>
        <taxon>rosids</taxon>
        <taxon>fabids</taxon>
        <taxon>Cucurbitales</taxon>
        <taxon>Cucurbitaceae</taxon>
        <taxon>Benincaseae</taxon>
        <taxon>Cucumis</taxon>
    </lineage>
</organism>
<accession>P42050</accession>
<feature type="chain" id="PRO_0000219142" description="Photosystem I reaction center subunit VI, chloroplastic">
    <location>
        <begin position="1"/>
        <end position="24" status="greater than"/>
    </location>
</feature>
<feature type="non-terminal residue">
    <location>
        <position position="24"/>
    </location>
</feature>
<keyword id="KW-0150">Chloroplast</keyword>
<keyword id="KW-0903">Direct protein sequencing</keyword>
<keyword id="KW-0472">Membrane</keyword>
<keyword id="KW-0602">Photosynthesis</keyword>
<keyword id="KW-0603">Photosystem I</keyword>
<keyword id="KW-0934">Plastid</keyword>
<keyword id="KW-0793">Thylakoid</keyword>
<keyword id="KW-0812">Transmembrane</keyword>